<proteinExistence type="inferred from homology"/>
<protein>
    <recommendedName>
        <fullName evidence="1">Arginine repressor</fullName>
    </recommendedName>
</protein>
<name>ARGR_ECO27</name>
<feature type="chain" id="PRO_1000123794" description="Arginine repressor">
    <location>
        <begin position="1"/>
        <end position="156"/>
    </location>
</feature>
<gene>
    <name evidence="1" type="primary">argR</name>
    <name type="ordered locus">E2348C_3508</name>
</gene>
<accession>B7UJW9</accession>
<dbReference type="EMBL" id="FM180568">
    <property type="protein sequence ID" value="CAS11056.1"/>
    <property type="molecule type" value="Genomic_DNA"/>
</dbReference>
<dbReference type="RefSeq" id="WP_001257847.1">
    <property type="nucleotide sequence ID" value="NC_011601.1"/>
</dbReference>
<dbReference type="SMR" id="B7UJW9"/>
<dbReference type="KEGG" id="ecg:E2348C_3508"/>
<dbReference type="HOGENOM" id="CLU_097103_2_0_6"/>
<dbReference type="UniPathway" id="UPA00068"/>
<dbReference type="Proteomes" id="UP000008205">
    <property type="component" value="Chromosome"/>
</dbReference>
<dbReference type="GO" id="GO:0005737">
    <property type="term" value="C:cytoplasm"/>
    <property type="evidence" value="ECO:0007669"/>
    <property type="project" value="UniProtKB-SubCell"/>
</dbReference>
<dbReference type="GO" id="GO:0034618">
    <property type="term" value="F:arginine binding"/>
    <property type="evidence" value="ECO:0007669"/>
    <property type="project" value="InterPro"/>
</dbReference>
<dbReference type="GO" id="GO:0003677">
    <property type="term" value="F:DNA binding"/>
    <property type="evidence" value="ECO:0007669"/>
    <property type="project" value="UniProtKB-KW"/>
</dbReference>
<dbReference type="GO" id="GO:0003700">
    <property type="term" value="F:DNA-binding transcription factor activity"/>
    <property type="evidence" value="ECO:0007669"/>
    <property type="project" value="UniProtKB-UniRule"/>
</dbReference>
<dbReference type="GO" id="GO:0006526">
    <property type="term" value="P:L-arginine biosynthetic process"/>
    <property type="evidence" value="ECO:0007669"/>
    <property type="project" value="UniProtKB-UniPathway"/>
</dbReference>
<dbReference type="GO" id="GO:0051259">
    <property type="term" value="P:protein complex oligomerization"/>
    <property type="evidence" value="ECO:0007669"/>
    <property type="project" value="InterPro"/>
</dbReference>
<dbReference type="GO" id="GO:1900079">
    <property type="term" value="P:regulation of arginine biosynthetic process"/>
    <property type="evidence" value="ECO:0007669"/>
    <property type="project" value="UniProtKB-UniRule"/>
</dbReference>
<dbReference type="FunFam" id="1.10.10.10:FF:000074">
    <property type="entry name" value="Arginine repressor"/>
    <property type="match status" value="1"/>
</dbReference>
<dbReference type="FunFam" id="3.30.1360.40:FF:000004">
    <property type="entry name" value="Arginine repressor"/>
    <property type="match status" value="1"/>
</dbReference>
<dbReference type="Gene3D" id="3.30.1360.40">
    <property type="match status" value="1"/>
</dbReference>
<dbReference type="Gene3D" id="1.10.10.10">
    <property type="entry name" value="Winged helix-like DNA-binding domain superfamily/Winged helix DNA-binding domain"/>
    <property type="match status" value="1"/>
</dbReference>
<dbReference type="HAMAP" id="MF_00173">
    <property type="entry name" value="Arg_repressor"/>
    <property type="match status" value="1"/>
</dbReference>
<dbReference type="InterPro" id="IPR001669">
    <property type="entry name" value="Arg_repress"/>
</dbReference>
<dbReference type="InterPro" id="IPR020899">
    <property type="entry name" value="Arg_repress_C"/>
</dbReference>
<dbReference type="InterPro" id="IPR036251">
    <property type="entry name" value="Arg_repress_C_sf"/>
</dbReference>
<dbReference type="InterPro" id="IPR020900">
    <property type="entry name" value="Arg_repress_DNA-bd"/>
</dbReference>
<dbReference type="InterPro" id="IPR036388">
    <property type="entry name" value="WH-like_DNA-bd_sf"/>
</dbReference>
<dbReference type="InterPro" id="IPR036390">
    <property type="entry name" value="WH_DNA-bd_sf"/>
</dbReference>
<dbReference type="NCBIfam" id="TIGR01529">
    <property type="entry name" value="argR_whole"/>
    <property type="match status" value="1"/>
</dbReference>
<dbReference type="NCBIfam" id="NF003457">
    <property type="entry name" value="PRK05066.1"/>
    <property type="match status" value="1"/>
</dbReference>
<dbReference type="PANTHER" id="PTHR34471">
    <property type="entry name" value="ARGININE REPRESSOR"/>
    <property type="match status" value="1"/>
</dbReference>
<dbReference type="PANTHER" id="PTHR34471:SF1">
    <property type="entry name" value="ARGININE REPRESSOR"/>
    <property type="match status" value="1"/>
</dbReference>
<dbReference type="Pfam" id="PF01316">
    <property type="entry name" value="Arg_repressor"/>
    <property type="match status" value="1"/>
</dbReference>
<dbReference type="Pfam" id="PF02863">
    <property type="entry name" value="Arg_repressor_C"/>
    <property type="match status" value="1"/>
</dbReference>
<dbReference type="PRINTS" id="PR01467">
    <property type="entry name" value="ARGREPRESSOR"/>
</dbReference>
<dbReference type="SUPFAM" id="SSF55252">
    <property type="entry name" value="C-terminal domain of arginine repressor"/>
    <property type="match status" value="1"/>
</dbReference>
<dbReference type="SUPFAM" id="SSF46785">
    <property type="entry name" value="Winged helix' DNA-binding domain"/>
    <property type="match status" value="1"/>
</dbReference>
<evidence type="ECO:0000255" key="1">
    <source>
        <dbReference type="HAMAP-Rule" id="MF_00173"/>
    </source>
</evidence>
<reference key="1">
    <citation type="journal article" date="2009" name="J. Bacteriol.">
        <title>Complete genome sequence and comparative genome analysis of enteropathogenic Escherichia coli O127:H6 strain E2348/69.</title>
        <authorList>
            <person name="Iguchi A."/>
            <person name="Thomson N.R."/>
            <person name="Ogura Y."/>
            <person name="Saunders D."/>
            <person name="Ooka T."/>
            <person name="Henderson I.R."/>
            <person name="Harris D."/>
            <person name="Asadulghani M."/>
            <person name="Kurokawa K."/>
            <person name="Dean P."/>
            <person name="Kenny B."/>
            <person name="Quail M.A."/>
            <person name="Thurston S."/>
            <person name="Dougan G."/>
            <person name="Hayashi T."/>
            <person name="Parkhill J."/>
            <person name="Frankel G."/>
        </authorList>
    </citation>
    <scope>NUCLEOTIDE SEQUENCE [LARGE SCALE GENOMIC DNA]</scope>
    <source>
        <strain>E2348/69 / EPEC</strain>
    </source>
</reference>
<sequence>MRSSAKQEELVKAFKALLKEEKFSSQGEIVAALQEQGFDNINQSKVSRMLTKFGAVRTRNAKMEMVYCLPAELGVPTTSSPLKNLVLDIDYNDAVVVIHTSPGAAQLIARLLDSLGKAEGILGTIAGDDTIFTTPANGFTVKELYEAILELFDQEL</sequence>
<comment type="function">
    <text evidence="1">Regulates arginine biosynthesis genes.</text>
</comment>
<comment type="pathway">
    <text>Amino-acid biosynthesis; L-arginine biosynthesis [regulation].</text>
</comment>
<comment type="subcellular location">
    <subcellularLocation>
        <location evidence="1">Cytoplasm</location>
    </subcellularLocation>
</comment>
<comment type="similarity">
    <text evidence="1">Belongs to the ArgR family.</text>
</comment>
<organism>
    <name type="scientific">Escherichia coli O127:H6 (strain E2348/69 / EPEC)</name>
    <dbReference type="NCBI Taxonomy" id="574521"/>
    <lineage>
        <taxon>Bacteria</taxon>
        <taxon>Pseudomonadati</taxon>
        <taxon>Pseudomonadota</taxon>
        <taxon>Gammaproteobacteria</taxon>
        <taxon>Enterobacterales</taxon>
        <taxon>Enterobacteriaceae</taxon>
        <taxon>Escherichia</taxon>
    </lineage>
</organism>
<keyword id="KW-0028">Amino-acid biosynthesis</keyword>
<keyword id="KW-0055">Arginine biosynthesis</keyword>
<keyword id="KW-0963">Cytoplasm</keyword>
<keyword id="KW-0238">DNA-binding</keyword>
<keyword id="KW-1185">Reference proteome</keyword>
<keyword id="KW-0678">Repressor</keyword>
<keyword id="KW-0804">Transcription</keyword>
<keyword id="KW-0805">Transcription regulation</keyword>